<organism>
    <name type="scientific">Oryza sativa subsp. japonica</name>
    <name type="common">Rice</name>
    <dbReference type="NCBI Taxonomy" id="39947"/>
    <lineage>
        <taxon>Eukaryota</taxon>
        <taxon>Viridiplantae</taxon>
        <taxon>Streptophyta</taxon>
        <taxon>Embryophyta</taxon>
        <taxon>Tracheophyta</taxon>
        <taxon>Spermatophyta</taxon>
        <taxon>Magnoliopsida</taxon>
        <taxon>Liliopsida</taxon>
        <taxon>Poales</taxon>
        <taxon>Poaceae</taxon>
        <taxon>BOP clade</taxon>
        <taxon>Oryzoideae</taxon>
        <taxon>Oryzeae</taxon>
        <taxon>Oryzinae</taxon>
        <taxon>Oryza</taxon>
        <taxon>Oryza sativa</taxon>
    </lineage>
</organism>
<evidence type="ECO:0000250" key="1">
    <source>
        <dbReference type="UniProtKB" id="O82387"/>
    </source>
</evidence>
<evidence type="ECO:0000256" key="2">
    <source>
        <dbReference type="SAM" id="MobiDB-lite"/>
    </source>
</evidence>
<evidence type="ECO:0000305" key="3"/>
<evidence type="ECO:0000312" key="4">
    <source>
        <dbReference type="EMBL" id="BAD82303.1"/>
    </source>
</evidence>
<evidence type="ECO:0000312" key="5">
    <source>
        <dbReference type="EMBL" id="BAD82304.1"/>
    </source>
</evidence>
<evidence type="ECO:0000312" key="6">
    <source>
        <dbReference type="EMBL" id="BAF06759.2"/>
    </source>
</evidence>
<proteinExistence type="evidence at transcript level"/>
<dbReference type="EMBL" id="AP003415">
    <property type="protein sequence ID" value="BAD82303.1"/>
    <property type="molecule type" value="Genomic_DNA"/>
</dbReference>
<dbReference type="EMBL" id="AP003415">
    <property type="protein sequence ID" value="BAD82304.1"/>
    <property type="molecule type" value="Genomic_DNA"/>
</dbReference>
<dbReference type="EMBL" id="AP008207">
    <property type="protein sequence ID" value="BAF06759.2"/>
    <property type="molecule type" value="Genomic_DNA"/>
</dbReference>
<dbReference type="EMBL" id="AP014957">
    <property type="protein sequence ID" value="BAS75291.1"/>
    <property type="molecule type" value="Genomic_DNA"/>
</dbReference>
<dbReference type="EMBL" id="AP014957">
    <property type="protein sequence ID" value="BAS75292.1"/>
    <property type="molecule type" value="Genomic_DNA"/>
</dbReference>
<dbReference type="EMBL" id="AK107439">
    <property type="status" value="NOT_ANNOTATED_CDS"/>
    <property type="molecule type" value="mRNA"/>
</dbReference>
<dbReference type="EMBL" id="AK107451">
    <property type="status" value="NOT_ANNOTATED_CDS"/>
    <property type="molecule type" value="mRNA"/>
</dbReference>
<dbReference type="RefSeq" id="XP_015622249.1">
    <molecule id="Q5N897-1"/>
    <property type="nucleotide sequence ID" value="XM_015766763.1"/>
</dbReference>
<dbReference type="SMR" id="Q5N897"/>
<dbReference type="FunCoup" id="Q5N897">
    <property type="interactions" value="763"/>
</dbReference>
<dbReference type="STRING" id="39947.Q5N897"/>
<dbReference type="PaxDb" id="39947-Q5N897"/>
<dbReference type="EnsemblPlants" id="Os01t0856000-02">
    <molecule id="Q5N897-1"/>
    <property type="protein sequence ID" value="Os01t0856000-02"/>
    <property type="gene ID" value="Os01g0856000"/>
</dbReference>
<dbReference type="GeneID" id="4324832"/>
<dbReference type="Gramene" id="Os01t0856000-02">
    <molecule id="Q5N897-1"/>
    <property type="protein sequence ID" value="Os01t0856000-02"/>
    <property type="gene ID" value="Os01g0856000"/>
</dbReference>
<dbReference type="KEGG" id="dosa:Os01g0856000"/>
<dbReference type="KEGG" id="osa:4324832"/>
<dbReference type="eggNOG" id="KOG2227">
    <property type="taxonomic scope" value="Eukaryota"/>
</dbReference>
<dbReference type="InParanoid" id="Q5N897"/>
<dbReference type="OMA" id="WPTDEVY"/>
<dbReference type="PlantReactome" id="R-OSA-9640882">
    <property type="pathway name" value="Assembly of pre-replication complex"/>
</dbReference>
<dbReference type="PlantReactome" id="R-OSA-9640887">
    <property type="pathway name" value="G1/S transition"/>
</dbReference>
<dbReference type="PlantReactome" id="R-OSA-9645850">
    <property type="pathway name" value="Activation of pre-replication complex"/>
</dbReference>
<dbReference type="Proteomes" id="UP000000763">
    <property type="component" value="Chromosome 1"/>
</dbReference>
<dbReference type="Proteomes" id="UP000059680">
    <property type="component" value="Chromosome 1"/>
</dbReference>
<dbReference type="GO" id="GO:0005634">
    <property type="term" value="C:nucleus"/>
    <property type="evidence" value="ECO:0000318"/>
    <property type="project" value="GO_Central"/>
</dbReference>
<dbReference type="GO" id="GO:0016887">
    <property type="term" value="F:ATP hydrolysis activity"/>
    <property type="evidence" value="ECO:0007669"/>
    <property type="project" value="InterPro"/>
</dbReference>
<dbReference type="GO" id="GO:0003688">
    <property type="term" value="F:DNA replication origin binding"/>
    <property type="evidence" value="ECO:0000318"/>
    <property type="project" value="GO_Central"/>
</dbReference>
<dbReference type="GO" id="GO:0051301">
    <property type="term" value="P:cell division"/>
    <property type="evidence" value="ECO:0007669"/>
    <property type="project" value="UniProtKB-KW"/>
</dbReference>
<dbReference type="GO" id="GO:0006270">
    <property type="term" value="P:DNA replication initiation"/>
    <property type="evidence" value="ECO:0000318"/>
    <property type="project" value="GO_Central"/>
</dbReference>
<dbReference type="GO" id="GO:0033314">
    <property type="term" value="P:mitotic DNA replication checkpoint signaling"/>
    <property type="evidence" value="ECO:0000318"/>
    <property type="project" value="GO_Central"/>
</dbReference>
<dbReference type="CDD" id="cd00009">
    <property type="entry name" value="AAA"/>
    <property type="match status" value="1"/>
</dbReference>
<dbReference type="CDD" id="cd08768">
    <property type="entry name" value="Cdc6_C"/>
    <property type="match status" value="1"/>
</dbReference>
<dbReference type="FunFam" id="1.10.10.10:FF:000532">
    <property type="entry name" value="Cell division control protein"/>
    <property type="match status" value="1"/>
</dbReference>
<dbReference type="FunFam" id="1.10.8.60:FF:000102">
    <property type="entry name" value="Cell division control protein"/>
    <property type="match status" value="1"/>
</dbReference>
<dbReference type="FunFam" id="3.40.50.300:FF:000547">
    <property type="entry name" value="Cell division control protein"/>
    <property type="match status" value="1"/>
</dbReference>
<dbReference type="Gene3D" id="1.10.8.60">
    <property type="match status" value="1"/>
</dbReference>
<dbReference type="Gene3D" id="3.40.50.300">
    <property type="entry name" value="P-loop containing nucleotide triphosphate hydrolases"/>
    <property type="match status" value="1"/>
</dbReference>
<dbReference type="Gene3D" id="1.10.10.10">
    <property type="entry name" value="Winged helix-like DNA-binding domain superfamily/Winged helix DNA-binding domain"/>
    <property type="match status" value="1"/>
</dbReference>
<dbReference type="InterPro" id="IPR049945">
    <property type="entry name" value="AAA_22"/>
</dbReference>
<dbReference type="InterPro" id="IPR016314">
    <property type="entry name" value="Cdc6/18"/>
</dbReference>
<dbReference type="InterPro" id="IPR015163">
    <property type="entry name" value="Cdc6_C"/>
</dbReference>
<dbReference type="InterPro" id="IPR054425">
    <property type="entry name" value="Cdc6_ORC1-like_ATPase_lid"/>
</dbReference>
<dbReference type="InterPro" id="IPR050311">
    <property type="entry name" value="ORC1/CDC6"/>
</dbReference>
<dbReference type="InterPro" id="IPR027417">
    <property type="entry name" value="P-loop_NTPase"/>
</dbReference>
<dbReference type="InterPro" id="IPR036388">
    <property type="entry name" value="WH-like_DNA-bd_sf"/>
</dbReference>
<dbReference type="InterPro" id="IPR036390">
    <property type="entry name" value="WH_DNA-bd_sf"/>
</dbReference>
<dbReference type="PANTHER" id="PTHR10763:SF26">
    <property type="entry name" value="CELL DIVISION CONTROL PROTEIN 6 HOMOLOG"/>
    <property type="match status" value="1"/>
</dbReference>
<dbReference type="PANTHER" id="PTHR10763">
    <property type="entry name" value="CELL DIVISION CONTROL PROTEIN 6-RELATED"/>
    <property type="match status" value="1"/>
</dbReference>
<dbReference type="Pfam" id="PF13401">
    <property type="entry name" value="AAA_22"/>
    <property type="match status" value="1"/>
</dbReference>
<dbReference type="Pfam" id="PF22606">
    <property type="entry name" value="Cdc6-ORC-like_ATPase_lid"/>
    <property type="match status" value="1"/>
</dbReference>
<dbReference type="Pfam" id="PF09079">
    <property type="entry name" value="Cdc6_C"/>
    <property type="match status" value="1"/>
</dbReference>
<dbReference type="PIRSF" id="PIRSF001767">
    <property type="entry name" value="Cdc6"/>
    <property type="match status" value="1"/>
</dbReference>
<dbReference type="SMART" id="SM01074">
    <property type="entry name" value="Cdc6_C"/>
    <property type="match status" value="1"/>
</dbReference>
<dbReference type="SUPFAM" id="SSF52540">
    <property type="entry name" value="P-loop containing nucleoside triphosphate hydrolases"/>
    <property type="match status" value="1"/>
</dbReference>
<dbReference type="SUPFAM" id="SSF46785">
    <property type="entry name" value="Winged helix' DNA-binding domain"/>
    <property type="match status" value="1"/>
</dbReference>
<keyword id="KW-0025">Alternative splicing</keyword>
<keyword id="KW-0131">Cell cycle</keyword>
<keyword id="KW-0132">Cell division</keyword>
<keyword id="KW-0235">DNA replication</keyword>
<keyword id="KW-0539">Nucleus</keyword>
<keyword id="KW-1185">Reference proteome</keyword>
<reference key="1">
    <citation type="journal article" date="2002" name="Nature">
        <title>The genome sequence and structure of rice chromosome 1.</title>
        <authorList>
            <person name="Sasaki T."/>
            <person name="Matsumoto T."/>
            <person name="Yamamoto K."/>
            <person name="Sakata K."/>
            <person name="Baba T."/>
            <person name="Katayose Y."/>
            <person name="Wu J."/>
            <person name="Niimura Y."/>
            <person name="Cheng Z."/>
            <person name="Nagamura Y."/>
            <person name="Antonio B.A."/>
            <person name="Kanamori H."/>
            <person name="Hosokawa S."/>
            <person name="Masukawa M."/>
            <person name="Arikawa K."/>
            <person name="Chiden Y."/>
            <person name="Hayashi M."/>
            <person name="Okamoto M."/>
            <person name="Ando T."/>
            <person name="Aoki H."/>
            <person name="Arita K."/>
            <person name="Hamada M."/>
            <person name="Harada C."/>
            <person name="Hijishita S."/>
            <person name="Honda M."/>
            <person name="Ichikawa Y."/>
            <person name="Idonuma A."/>
            <person name="Iijima M."/>
            <person name="Ikeda M."/>
            <person name="Ikeno M."/>
            <person name="Ito S."/>
            <person name="Ito T."/>
            <person name="Ito Y."/>
            <person name="Ito Y."/>
            <person name="Iwabuchi A."/>
            <person name="Kamiya K."/>
            <person name="Karasawa W."/>
            <person name="Katagiri S."/>
            <person name="Kikuta A."/>
            <person name="Kobayashi N."/>
            <person name="Kono I."/>
            <person name="Machita K."/>
            <person name="Maehara T."/>
            <person name="Mizuno H."/>
            <person name="Mizubayashi T."/>
            <person name="Mukai Y."/>
            <person name="Nagasaki H."/>
            <person name="Nakashima M."/>
            <person name="Nakama Y."/>
            <person name="Nakamichi Y."/>
            <person name="Nakamura M."/>
            <person name="Namiki N."/>
            <person name="Negishi M."/>
            <person name="Ohta I."/>
            <person name="Ono N."/>
            <person name="Saji S."/>
            <person name="Sakai K."/>
            <person name="Shibata M."/>
            <person name="Shimokawa T."/>
            <person name="Shomura A."/>
            <person name="Song J."/>
            <person name="Takazaki Y."/>
            <person name="Terasawa K."/>
            <person name="Tsuji K."/>
            <person name="Waki K."/>
            <person name="Yamagata H."/>
            <person name="Yamane H."/>
            <person name="Yoshiki S."/>
            <person name="Yoshihara R."/>
            <person name="Yukawa K."/>
            <person name="Zhong H."/>
            <person name="Iwama H."/>
            <person name="Endo T."/>
            <person name="Ito H."/>
            <person name="Hahn J.H."/>
            <person name="Kim H.-I."/>
            <person name="Eun M.-Y."/>
            <person name="Yano M."/>
            <person name="Jiang J."/>
            <person name="Gojobori T."/>
        </authorList>
    </citation>
    <scope>NUCLEOTIDE SEQUENCE [LARGE SCALE GENOMIC DNA]</scope>
    <source>
        <strain>cv. Nipponbare</strain>
    </source>
</reference>
<reference key="2">
    <citation type="journal article" date="2005" name="Nature">
        <title>The map-based sequence of the rice genome.</title>
        <authorList>
            <consortium name="International rice genome sequencing project (IRGSP)"/>
        </authorList>
    </citation>
    <scope>NUCLEOTIDE SEQUENCE [LARGE SCALE GENOMIC DNA]</scope>
    <source>
        <strain>cv. Nipponbare</strain>
    </source>
</reference>
<reference key="3">
    <citation type="journal article" date="2008" name="Nucleic Acids Res.">
        <title>The rice annotation project database (RAP-DB): 2008 update.</title>
        <authorList>
            <consortium name="The rice annotation project (RAP)"/>
        </authorList>
    </citation>
    <scope>GENOME REANNOTATION</scope>
    <source>
        <strain>cv. Nipponbare</strain>
    </source>
</reference>
<reference key="4">
    <citation type="journal article" date="2013" name="Rice">
        <title>Improvement of the Oryza sativa Nipponbare reference genome using next generation sequence and optical map data.</title>
        <authorList>
            <person name="Kawahara Y."/>
            <person name="de la Bastide M."/>
            <person name="Hamilton J.P."/>
            <person name="Kanamori H."/>
            <person name="McCombie W.R."/>
            <person name="Ouyang S."/>
            <person name="Schwartz D.C."/>
            <person name="Tanaka T."/>
            <person name="Wu J."/>
            <person name="Zhou S."/>
            <person name="Childs K.L."/>
            <person name="Davidson R.M."/>
            <person name="Lin H."/>
            <person name="Quesada-Ocampo L."/>
            <person name="Vaillancourt B."/>
            <person name="Sakai H."/>
            <person name="Lee S.S."/>
            <person name="Kim J."/>
            <person name="Numa H."/>
            <person name="Itoh T."/>
            <person name="Buell C.R."/>
            <person name="Matsumoto T."/>
        </authorList>
    </citation>
    <scope>GENOME REANNOTATION</scope>
    <source>
        <strain>cv. Nipponbare</strain>
    </source>
</reference>
<reference key="5">
    <citation type="journal article" date="2003" name="Science">
        <title>Collection, mapping, and annotation of over 28,000 cDNA clones from japonica rice.</title>
        <authorList>
            <consortium name="The rice full-length cDNA consortium"/>
        </authorList>
    </citation>
    <scope>NUCLEOTIDE SEQUENCE [LARGE SCALE MRNA] (ISOFORMS 1 AND 2)</scope>
    <source>
        <strain>cv. Nipponbare</strain>
    </source>
</reference>
<feature type="chain" id="PRO_0000432985" description="Cell division control protein 6 homolog">
    <location>
        <begin position="1"/>
        <end position="515"/>
    </location>
</feature>
<feature type="region of interest" description="Disordered" evidence="2">
    <location>
        <begin position="1"/>
        <end position="70"/>
    </location>
</feature>
<feature type="compositionally biased region" description="Low complexity" evidence="2">
    <location>
        <begin position="1"/>
        <end position="24"/>
    </location>
</feature>
<feature type="compositionally biased region" description="Polar residues" evidence="2">
    <location>
        <begin position="43"/>
        <end position="52"/>
    </location>
</feature>
<feature type="splice variant" id="VSP_057639" description="In isoform 2.">
    <original>MPTLRSATASASTAGTASPTAIATPRSAKRRLTSPRRAAGSPDASQFTSPHKSPNVGI</original>
    <variation>MRSNCSILQ</variation>
    <location>
        <begin position="1"/>
        <end position="58"/>
    </location>
</feature>
<feature type="splice variant" id="VSP_057640" description="In isoform 2.">
    <location>
        <begin position="92"/>
        <end position="117"/>
    </location>
</feature>
<name>CDC6_ORYSJ</name>
<sequence>MPTLRSATASASTAGTASPTAIATPRSAKRRLTSPRRAAGSPDASQFTSPHKSPNVGIVGTPKLLSASPRSSRKRLYGDFVAAEKPKWNPRGKSPESHFSRAQSSDWDLTKEFICSADPAQMQVVKEALHVATVPSCGLVCRDDEQSRVLEFCKGCVEQERSGSLYVCGCPGTGKTLSINKVKESVARWADETGMETPDALSINCTSLAKTHEIFSKILAKFQTRKKATCKLSPLQQLQTMFSHKESAPRRMLLVVVDEMDYLITRDRAVLHDLFMLTTYQFSRCILIGIANAIDLADRFLPKLESLNCKPLVVTFRAYSKDQISDIIKHRLKVLEYDVFEPLALEFCARKVAAASGDMRKALGVCRSAVEVFEARLQESSDQEFGLVTFDHMDIALSKAFKSPVVDSILCLPQHQQMVLCALANTFHHCKKKATTLGELNKSYIEICRSTQVPAVGMLEFSNMCMVLSDQGFMKLGQSKEDKLRRVMLQIDSSDITFAFKGNRFFQKCLEQQKF</sequence>
<protein>
    <recommendedName>
        <fullName evidence="3">Cell division control protein 6 homolog</fullName>
    </recommendedName>
</protein>
<gene>
    <name evidence="3" type="primary">CDC6</name>
    <name evidence="6" type="ordered locus">Os01g0856000</name>
    <name evidence="3" type="ordered locus">LOC_Os01g63710</name>
    <name evidence="4" type="ORF">OJ1402_H07.11-1</name>
    <name evidence="5" type="ORF">OJ1402_H07.11-2</name>
</gene>
<accession>Q5N897</accession>
<accession>A0A0P0VAJ2</accession>
<accession>Q0JHL9</accession>
<accession>Q5N896</accession>
<comment type="function">
    <text evidence="1">May be involved in the initiation of DNA replication.</text>
</comment>
<comment type="subcellular location">
    <subcellularLocation>
        <location evidence="1">Nucleus</location>
    </subcellularLocation>
</comment>
<comment type="alternative products">
    <event type="alternative splicing"/>
    <isoform>
        <id>Q5N897-1</id>
        <name>1</name>
        <sequence type="displayed"/>
    </isoform>
    <isoform>
        <id>Q5N897-2</id>
        <name>2</name>
        <sequence type="described" ref="VSP_057639 VSP_057640"/>
    </isoform>
</comment>
<comment type="similarity">
    <text evidence="3">Belongs to the CDC6/cdc18 family.</text>
</comment>